<organism>
    <name type="scientific">Pisum sativum</name>
    <name type="common">Garden pea</name>
    <name type="synonym">Lathyrus oleraceus</name>
    <dbReference type="NCBI Taxonomy" id="3888"/>
    <lineage>
        <taxon>Eukaryota</taxon>
        <taxon>Viridiplantae</taxon>
        <taxon>Streptophyta</taxon>
        <taxon>Embryophyta</taxon>
        <taxon>Tracheophyta</taxon>
        <taxon>Spermatophyta</taxon>
        <taxon>Magnoliopsida</taxon>
        <taxon>eudicotyledons</taxon>
        <taxon>Gunneridae</taxon>
        <taxon>Pentapetalae</taxon>
        <taxon>rosids</taxon>
        <taxon>fabids</taxon>
        <taxon>Fabales</taxon>
        <taxon>Fabaceae</taxon>
        <taxon>Papilionoideae</taxon>
        <taxon>50 kb inversion clade</taxon>
        <taxon>NPAAA clade</taxon>
        <taxon>Hologalegina</taxon>
        <taxon>IRL clade</taxon>
        <taxon>Fabeae</taxon>
        <taxon>Pisum</taxon>
    </lineage>
</organism>
<dbReference type="GO" id="GO:0009534">
    <property type="term" value="C:chloroplast thylakoid"/>
    <property type="evidence" value="ECO:0007669"/>
    <property type="project" value="UniProtKB-SubCell"/>
</dbReference>
<evidence type="ECO:0000269" key="1">
    <source>
    </source>
</evidence>
<evidence type="ECO:0000303" key="2">
    <source>
    </source>
</evidence>
<evidence type="ECO:0000305" key="3"/>
<name>UT251_PEA</name>
<protein>
    <recommendedName>
        <fullName>Unknown protein from spot 251 of 2D-PAGE of thylakoid</fullName>
    </recommendedName>
</protein>
<accession>P82341</accession>
<reference evidence="3" key="1">
    <citation type="journal article" date="2000" name="Plant Cell">
        <title>Proteomics of the chloroplast: systematic identification and targeting analysis of lumenal and peripheral thylakoid proteins.</title>
        <authorList>
            <person name="Peltier J.-B."/>
            <person name="Friso G."/>
            <person name="Kalume D.E."/>
            <person name="Roepstorff P."/>
            <person name="Nilsson F."/>
            <person name="Adamska I."/>
            <person name="van Wijk K.J."/>
        </authorList>
    </citation>
    <scope>PROTEIN SEQUENCE</scope>
    <scope>SUBCELLULAR LOCATION</scope>
    <source>
        <strain evidence="1">cv. De Grace</strain>
        <tissue evidence="1">Leaf</tissue>
    </source>
</reference>
<keyword id="KW-0150">Chloroplast</keyword>
<keyword id="KW-0903">Direct protein sequencing</keyword>
<keyword id="KW-0934">Plastid</keyword>
<keyword id="KW-0793">Thylakoid</keyword>
<comment type="subcellular location">
    <subcellularLocation>
        <location evidence="1">Plastid</location>
        <location evidence="1">Chloroplast thylakoid</location>
    </subcellularLocation>
</comment>
<comment type="miscellaneous">
    <text evidence="1">On the 2D-gel the determined pI of this protein is: 8.5, its MW is: 16.9 kDa.</text>
</comment>
<proteinExistence type="evidence at protein level"/>
<sequence>XXEVAPEILDVXQF</sequence>
<feature type="chain" id="PRO_0000234482" description="Unknown protein from spot 251 of 2D-PAGE of thylakoid">
    <location>
        <begin position="1"/>
        <end position="14" status="greater than"/>
    </location>
</feature>
<feature type="non-terminal residue" evidence="2">
    <location>
        <position position="14"/>
    </location>
</feature>